<reference key="1">
    <citation type="journal article" date="2005" name="Proc. Natl. Acad. Sci. U.S.A.">
        <title>Genome analysis of multiple pathogenic isolates of Streptococcus agalactiae: implications for the microbial 'pan-genome'.</title>
        <authorList>
            <person name="Tettelin H."/>
            <person name="Masignani V."/>
            <person name="Cieslewicz M.J."/>
            <person name="Donati C."/>
            <person name="Medini D."/>
            <person name="Ward N.L."/>
            <person name="Angiuoli S.V."/>
            <person name="Crabtree J."/>
            <person name="Jones A.L."/>
            <person name="Durkin A.S."/>
            <person name="DeBoy R.T."/>
            <person name="Davidsen T.M."/>
            <person name="Mora M."/>
            <person name="Scarselli M."/>
            <person name="Margarit y Ros I."/>
            <person name="Peterson J.D."/>
            <person name="Hauser C.R."/>
            <person name="Sundaram J.P."/>
            <person name="Nelson W.C."/>
            <person name="Madupu R."/>
            <person name="Brinkac L.M."/>
            <person name="Dodson R.J."/>
            <person name="Rosovitz M.J."/>
            <person name="Sullivan S.A."/>
            <person name="Daugherty S.C."/>
            <person name="Haft D.H."/>
            <person name="Selengut J."/>
            <person name="Gwinn M.L."/>
            <person name="Zhou L."/>
            <person name="Zafar N."/>
            <person name="Khouri H."/>
            <person name="Radune D."/>
            <person name="Dimitrov G."/>
            <person name="Watkins K."/>
            <person name="O'Connor K.J."/>
            <person name="Smith S."/>
            <person name="Utterback T.R."/>
            <person name="White O."/>
            <person name="Rubens C.E."/>
            <person name="Grandi G."/>
            <person name="Madoff L.C."/>
            <person name="Kasper D.L."/>
            <person name="Telford J.L."/>
            <person name="Wessels M.R."/>
            <person name="Rappuoli R."/>
            <person name="Fraser C.M."/>
        </authorList>
    </citation>
    <scope>NUCLEOTIDE SEQUENCE [LARGE SCALE GENOMIC DNA]</scope>
    <source>
        <strain>ATCC 27591 / A909 / CDC SS700</strain>
    </source>
</reference>
<keyword id="KW-0030">Aminoacyl-tRNA synthetase</keyword>
<keyword id="KW-0067">ATP-binding</keyword>
<keyword id="KW-0963">Cytoplasm</keyword>
<keyword id="KW-0436">Ligase</keyword>
<keyword id="KW-0479">Metal-binding</keyword>
<keyword id="KW-0547">Nucleotide-binding</keyword>
<keyword id="KW-0648">Protein biosynthesis</keyword>
<keyword id="KW-0694">RNA-binding</keyword>
<keyword id="KW-0820">tRNA-binding</keyword>
<keyword id="KW-0862">Zinc</keyword>
<feature type="chain" id="PRO_1000020525" description="Threonine--tRNA ligase">
    <location>
        <begin position="1"/>
        <end position="647"/>
    </location>
</feature>
<feature type="domain" description="TGS" evidence="2">
    <location>
        <begin position="1"/>
        <end position="61"/>
    </location>
</feature>
<feature type="region of interest" description="Catalytic" evidence="1">
    <location>
        <begin position="240"/>
        <end position="538"/>
    </location>
</feature>
<feature type="binding site" evidence="1">
    <location>
        <position position="334"/>
    </location>
    <ligand>
        <name>Zn(2+)</name>
        <dbReference type="ChEBI" id="CHEBI:29105"/>
    </ligand>
</feature>
<feature type="binding site" evidence="1">
    <location>
        <position position="385"/>
    </location>
    <ligand>
        <name>Zn(2+)</name>
        <dbReference type="ChEBI" id="CHEBI:29105"/>
    </ligand>
</feature>
<feature type="binding site" evidence="1">
    <location>
        <position position="515"/>
    </location>
    <ligand>
        <name>Zn(2+)</name>
        <dbReference type="ChEBI" id="CHEBI:29105"/>
    </ligand>
</feature>
<proteinExistence type="inferred from homology"/>
<protein>
    <recommendedName>
        <fullName evidence="1">Threonine--tRNA ligase</fullName>
        <ecNumber evidence="1">6.1.1.3</ecNumber>
    </recommendedName>
    <alternativeName>
        <fullName evidence="1">Threonyl-tRNA synthetase</fullName>
        <shortName evidence="1">ThrRS</shortName>
    </alternativeName>
</protein>
<evidence type="ECO:0000255" key="1">
    <source>
        <dbReference type="HAMAP-Rule" id="MF_00184"/>
    </source>
</evidence>
<evidence type="ECO:0000255" key="2">
    <source>
        <dbReference type="PROSITE-ProRule" id="PRU01228"/>
    </source>
</evidence>
<comment type="function">
    <text evidence="1">Catalyzes the attachment of threonine to tRNA(Thr) in a two-step reaction: L-threonine is first activated by ATP to form Thr-AMP and then transferred to the acceptor end of tRNA(Thr). Also edits incorrectly charged L-seryl-tRNA(Thr).</text>
</comment>
<comment type="catalytic activity">
    <reaction evidence="1">
        <text>tRNA(Thr) + L-threonine + ATP = L-threonyl-tRNA(Thr) + AMP + diphosphate + H(+)</text>
        <dbReference type="Rhea" id="RHEA:24624"/>
        <dbReference type="Rhea" id="RHEA-COMP:9670"/>
        <dbReference type="Rhea" id="RHEA-COMP:9704"/>
        <dbReference type="ChEBI" id="CHEBI:15378"/>
        <dbReference type="ChEBI" id="CHEBI:30616"/>
        <dbReference type="ChEBI" id="CHEBI:33019"/>
        <dbReference type="ChEBI" id="CHEBI:57926"/>
        <dbReference type="ChEBI" id="CHEBI:78442"/>
        <dbReference type="ChEBI" id="CHEBI:78534"/>
        <dbReference type="ChEBI" id="CHEBI:456215"/>
        <dbReference type="EC" id="6.1.1.3"/>
    </reaction>
</comment>
<comment type="cofactor">
    <cofactor evidence="1">
        <name>Zn(2+)</name>
        <dbReference type="ChEBI" id="CHEBI:29105"/>
    </cofactor>
    <text evidence="1">Binds 1 zinc ion per subunit.</text>
</comment>
<comment type="subunit">
    <text evidence="1">Homodimer.</text>
</comment>
<comment type="subcellular location">
    <subcellularLocation>
        <location evidence="1">Cytoplasm</location>
    </subcellularLocation>
</comment>
<comment type="similarity">
    <text evidence="1">Belongs to the class-II aminoacyl-tRNA synthetase family.</text>
</comment>
<name>SYT_STRA1</name>
<dbReference type="EC" id="6.1.1.3" evidence="1"/>
<dbReference type="EMBL" id="CP000114">
    <property type="protein sequence ID" value="ABA45445.1"/>
    <property type="molecule type" value="Genomic_DNA"/>
</dbReference>
<dbReference type="RefSeq" id="WP_000591012.1">
    <property type="nucleotide sequence ID" value="NC_007432.1"/>
</dbReference>
<dbReference type="SMR" id="Q3K1Z4"/>
<dbReference type="KEGG" id="sak:SAK_0837"/>
<dbReference type="HOGENOM" id="CLU_008554_3_2_9"/>
<dbReference type="GO" id="GO:0005737">
    <property type="term" value="C:cytoplasm"/>
    <property type="evidence" value="ECO:0007669"/>
    <property type="project" value="UniProtKB-SubCell"/>
</dbReference>
<dbReference type="GO" id="GO:0005524">
    <property type="term" value="F:ATP binding"/>
    <property type="evidence" value="ECO:0007669"/>
    <property type="project" value="UniProtKB-UniRule"/>
</dbReference>
<dbReference type="GO" id="GO:0140096">
    <property type="term" value="F:catalytic activity, acting on a protein"/>
    <property type="evidence" value="ECO:0007669"/>
    <property type="project" value="UniProtKB-ARBA"/>
</dbReference>
<dbReference type="GO" id="GO:0046872">
    <property type="term" value="F:metal ion binding"/>
    <property type="evidence" value="ECO:0007669"/>
    <property type="project" value="UniProtKB-KW"/>
</dbReference>
<dbReference type="GO" id="GO:0004829">
    <property type="term" value="F:threonine-tRNA ligase activity"/>
    <property type="evidence" value="ECO:0007669"/>
    <property type="project" value="UniProtKB-UniRule"/>
</dbReference>
<dbReference type="GO" id="GO:0016740">
    <property type="term" value="F:transferase activity"/>
    <property type="evidence" value="ECO:0007669"/>
    <property type="project" value="UniProtKB-ARBA"/>
</dbReference>
<dbReference type="GO" id="GO:0000049">
    <property type="term" value="F:tRNA binding"/>
    <property type="evidence" value="ECO:0007669"/>
    <property type="project" value="UniProtKB-KW"/>
</dbReference>
<dbReference type="GO" id="GO:0006435">
    <property type="term" value="P:threonyl-tRNA aminoacylation"/>
    <property type="evidence" value="ECO:0007669"/>
    <property type="project" value="UniProtKB-UniRule"/>
</dbReference>
<dbReference type="CDD" id="cd01667">
    <property type="entry name" value="TGS_ThrRS"/>
    <property type="match status" value="1"/>
</dbReference>
<dbReference type="CDD" id="cd00860">
    <property type="entry name" value="ThrRS_anticodon"/>
    <property type="match status" value="1"/>
</dbReference>
<dbReference type="CDD" id="cd00771">
    <property type="entry name" value="ThrRS_core"/>
    <property type="match status" value="1"/>
</dbReference>
<dbReference type="FunFam" id="3.10.20.30:FF:000005">
    <property type="entry name" value="Threonine--tRNA ligase"/>
    <property type="match status" value="1"/>
</dbReference>
<dbReference type="FunFam" id="3.30.54.20:FF:000002">
    <property type="entry name" value="Threonine--tRNA ligase"/>
    <property type="match status" value="1"/>
</dbReference>
<dbReference type="FunFam" id="3.30.930.10:FF:000002">
    <property type="entry name" value="Threonine--tRNA ligase"/>
    <property type="match status" value="1"/>
</dbReference>
<dbReference type="FunFam" id="3.40.50.800:FF:000001">
    <property type="entry name" value="Threonine--tRNA ligase"/>
    <property type="match status" value="1"/>
</dbReference>
<dbReference type="FunFam" id="3.30.980.10:FF:000005">
    <property type="entry name" value="Threonyl-tRNA synthetase, mitochondrial"/>
    <property type="match status" value="1"/>
</dbReference>
<dbReference type="Gene3D" id="3.10.20.30">
    <property type="match status" value="1"/>
</dbReference>
<dbReference type="Gene3D" id="3.30.54.20">
    <property type="match status" value="1"/>
</dbReference>
<dbReference type="Gene3D" id="3.40.50.800">
    <property type="entry name" value="Anticodon-binding domain"/>
    <property type="match status" value="1"/>
</dbReference>
<dbReference type="Gene3D" id="3.30.930.10">
    <property type="entry name" value="Bira Bifunctional Protein, Domain 2"/>
    <property type="match status" value="1"/>
</dbReference>
<dbReference type="Gene3D" id="3.30.980.10">
    <property type="entry name" value="Threonyl-trna Synthetase, Chain A, domain 2"/>
    <property type="match status" value="1"/>
</dbReference>
<dbReference type="HAMAP" id="MF_00184">
    <property type="entry name" value="Thr_tRNA_synth"/>
    <property type="match status" value="1"/>
</dbReference>
<dbReference type="InterPro" id="IPR002314">
    <property type="entry name" value="aa-tRNA-synt_IIb"/>
</dbReference>
<dbReference type="InterPro" id="IPR006195">
    <property type="entry name" value="aa-tRNA-synth_II"/>
</dbReference>
<dbReference type="InterPro" id="IPR045864">
    <property type="entry name" value="aa-tRNA-synth_II/BPL/LPL"/>
</dbReference>
<dbReference type="InterPro" id="IPR004154">
    <property type="entry name" value="Anticodon-bd"/>
</dbReference>
<dbReference type="InterPro" id="IPR036621">
    <property type="entry name" value="Anticodon-bd_dom_sf"/>
</dbReference>
<dbReference type="InterPro" id="IPR012675">
    <property type="entry name" value="Beta-grasp_dom_sf"/>
</dbReference>
<dbReference type="InterPro" id="IPR004095">
    <property type="entry name" value="TGS"/>
</dbReference>
<dbReference type="InterPro" id="IPR012676">
    <property type="entry name" value="TGS-like"/>
</dbReference>
<dbReference type="InterPro" id="IPR002320">
    <property type="entry name" value="Thr-tRNA-ligase_IIa"/>
</dbReference>
<dbReference type="InterPro" id="IPR018163">
    <property type="entry name" value="Thr/Ala-tRNA-synth_IIc_edit"/>
</dbReference>
<dbReference type="InterPro" id="IPR047246">
    <property type="entry name" value="ThrRS_anticodon"/>
</dbReference>
<dbReference type="InterPro" id="IPR033728">
    <property type="entry name" value="ThrRS_core"/>
</dbReference>
<dbReference type="InterPro" id="IPR012947">
    <property type="entry name" value="tRNA_SAD"/>
</dbReference>
<dbReference type="NCBIfam" id="TIGR00418">
    <property type="entry name" value="thrS"/>
    <property type="match status" value="1"/>
</dbReference>
<dbReference type="PANTHER" id="PTHR11451:SF56">
    <property type="entry name" value="THREONINE--TRNA LIGASE 1"/>
    <property type="match status" value="1"/>
</dbReference>
<dbReference type="PANTHER" id="PTHR11451">
    <property type="entry name" value="THREONINE-TRNA LIGASE"/>
    <property type="match status" value="1"/>
</dbReference>
<dbReference type="Pfam" id="PF03129">
    <property type="entry name" value="HGTP_anticodon"/>
    <property type="match status" value="1"/>
</dbReference>
<dbReference type="Pfam" id="PF02824">
    <property type="entry name" value="TGS"/>
    <property type="match status" value="1"/>
</dbReference>
<dbReference type="Pfam" id="PF00587">
    <property type="entry name" value="tRNA-synt_2b"/>
    <property type="match status" value="1"/>
</dbReference>
<dbReference type="Pfam" id="PF07973">
    <property type="entry name" value="tRNA_SAD"/>
    <property type="match status" value="1"/>
</dbReference>
<dbReference type="PRINTS" id="PR01047">
    <property type="entry name" value="TRNASYNTHTHR"/>
</dbReference>
<dbReference type="SMART" id="SM00863">
    <property type="entry name" value="tRNA_SAD"/>
    <property type="match status" value="1"/>
</dbReference>
<dbReference type="SUPFAM" id="SSF52954">
    <property type="entry name" value="Class II aaRS ABD-related"/>
    <property type="match status" value="1"/>
</dbReference>
<dbReference type="SUPFAM" id="SSF55681">
    <property type="entry name" value="Class II aaRS and biotin synthetases"/>
    <property type="match status" value="1"/>
</dbReference>
<dbReference type="SUPFAM" id="SSF81271">
    <property type="entry name" value="TGS-like"/>
    <property type="match status" value="1"/>
</dbReference>
<dbReference type="SUPFAM" id="SSF55186">
    <property type="entry name" value="ThrRS/AlaRS common domain"/>
    <property type="match status" value="1"/>
</dbReference>
<dbReference type="PROSITE" id="PS50862">
    <property type="entry name" value="AA_TRNA_LIGASE_II"/>
    <property type="match status" value="1"/>
</dbReference>
<dbReference type="PROSITE" id="PS51880">
    <property type="entry name" value="TGS"/>
    <property type="match status" value="1"/>
</dbReference>
<accession>Q3K1Z4</accession>
<organism>
    <name type="scientific">Streptococcus agalactiae serotype Ia (strain ATCC 27591 / A909 / CDC SS700)</name>
    <dbReference type="NCBI Taxonomy" id="205921"/>
    <lineage>
        <taxon>Bacteria</taxon>
        <taxon>Bacillati</taxon>
        <taxon>Bacillota</taxon>
        <taxon>Bacilli</taxon>
        <taxon>Lactobacillales</taxon>
        <taxon>Streptococcaceae</taxon>
        <taxon>Streptococcus</taxon>
    </lineage>
</organism>
<sequence length="647" mass="74570">MIKITFPDGAIREFESGITTFEIAQSISNSLAKKALAGKFNGQLIDTTRAIEEDGSIEIVTPDHEDALGVLRHSAAHLFAQAAKRLFPDLCLGVGPAIQDGFYYDTDNKSGQISNDDLPRIEEEMKKIVKENHPCIREEISKEEALELFKDDPYKVELISEHAEDGLTVYRQGEFVDLCRGPHVPSTGRIQVFHLLNVAGAYWRGNSDNAMMQRVYGTAWFDKKDLKAYLKRREEAKERDHRKLGKELDLFMVNPEVGQGLPFWLPNGATIRRELERYIVDKEIASGYQHVYTPPMASVEFYKTSGHWDHYREDMFPTMDMGDGEEFVLRPMNCPHHIEVYKHHVHSYRELPIRIAELGMMHRYEKSGALTGLQRVREMTLNDAHIFVTPEQIKDEFLKALNLIAEIYEDFNLTDYRFRLSYRDPEDKHKYYDNDEMWENAQAMLKEAMDDFGLDYFEAEGEAAFYGPKLDIQVKTALGNEETLSTIQLDFLLPERFDLKYIGADGEEHRPIMIHRGGISTMERFTAILIETYKGAFPTWLAPQQVSVIPISNEAHIDYAWEVARVLKDRGIRAEVDDRNEKMQYKIRAAQTQKIPYQLIVGDKEMEEKAVNVRRYGSKATETKSIEEFVESILADIARKSRPDEVK</sequence>
<gene>
    <name evidence="1" type="primary">thrS</name>
    <name type="ordered locus">SAK_0837</name>
</gene>